<organism>
    <name type="scientific">Pelobacter propionicus (strain DSM 2379 / NBRC 103807 / OttBd1)</name>
    <dbReference type="NCBI Taxonomy" id="338966"/>
    <lineage>
        <taxon>Bacteria</taxon>
        <taxon>Pseudomonadati</taxon>
        <taxon>Thermodesulfobacteriota</taxon>
        <taxon>Desulfuromonadia</taxon>
        <taxon>Desulfuromonadales</taxon>
        <taxon>Desulfuromonadaceae</taxon>
        <taxon>Pelobacter</taxon>
    </lineage>
</organism>
<name>RL28_PELPD</name>
<gene>
    <name evidence="1" type="primary">rpmB</name>
    <name type="ordered locus">Ppro_2397</name>
</gene>
<accession>A1ARN3</accession>
<sequence length="63" mass="6915">MSRICAICGKGPSFGNNVSHANNKTRTVWYPNLQKIKAVRNGSVKTIKVCTRCIRSGHVTKAL</sequence>
<dbReference type="EMBL" id="CP000482">
    <property type="protein sequence ID" value="ABL00004.1"/>
    <property type="molecule type" value="Genomic_DNA"/>
</dbReference>
<dbReference type="RefSeq" id="WP_011736259.1">
    <property type="nucleotide sequence ID" value="NC_008609.1"/>
</dbReference>
<dbReference type="SMR" id="A1ARN3"/>
<dbReference type="STRING" id="338966.Ppro_2397"/>
<dbReference type="KEGG" id="ppd:Ppro_2397"/>
<dbReference type="eggNOG" id="COG0227">
    <property type="taxonomic scope" value="Bacteria"/>
</dbReference>
<dbReference type="HOGENOM" id="CLU_064548_7_0_7"/>
<dbReference type="OrthoDB" id="9805609at2"/>
<dbReference type="Proteomes" id="UP000006732">
    <property type="component" value="Chromosome"/>
</dbReference>
<dbReference type="GO" id="GO:1990904">
    <property type="term" value="C:ribonucleoprotein complex"/>
    <property type="evidence" value="ECO:0007669"/>
    <property type="project" value="UniProtKB-KW"/>
</dbReference>
<dbReference type="GO" id="GO:0005840">
    <property type="term" value="C:ribosome"/>
    <property type="evidence" value="ECO:0007669"/>
    <property type="project" value="UniProtKB-KW"/>
</dbReference>
<dbReference type="GO" id="GO:0003735">
    <property type="term" value="F:structural constituent of ribosome"/>
    <property type="evidence" value="ECO:0007669"/>
    <property type="project" value="InterPro"/>
</dbReference>
<dbReference type="GO" id="GO:0006412">
    <property type="term" value="P:translation"/>
    <property type="evidence" value="ECO:0007669"/>
    <property type="project" value="UniProtKB-UniRule"/>
</dbReference>
<dbReference type="Gene3D" id="2.20.150.30">
    <property type="match status" value="1"/>
</dbReference>
<dbReference type="Gene3D" id="2.30.170.40">
    <property type="entry name" value="Ribosomal protein L28/L24"/>
    <property type="match status" value="1"/>
</dbReference>
<dbReference type="HAMAP" id="MF_00373">
    <property type="entry name" value="Ribosomal_bL28"/>
    <property type="match status" value="1"/>
</dbReference>
<dbReference type="InterPro" id="IPR050096">
    <property type="entry name" value="Bacterial_rp_bL28"/>
</dbReference>
<dbReference type="InterPro" id="IPR026569">
    <property type="entry name" value="Ribosomal_bL28"/>
</dbReference>
<dbReference type="InterPro" id="IPR034704">
    <property type="entry name" value="Ribosomal_bL28/bL31-like_sf"/>
</dbReference>
<dbReference type="InterPro" id="IPR001383">
    <property type="entry name" value="Ribosomal_bL28_bact-type"/>
</dbReference>
<dbReference type="InterPro" id="IPR037147">
    <property type="entry name" value="Ribosomal_bL28_sf"/>
</dbReference>
<dbReference type="NCBIfam" id="TIGR00009">
    <property type="entry name" value="L28"/>
    <property type="match status" value="1"/>
</dbReference>
<dbReference type="PANTHER" id="PTHR39080">
    <property type="entry name" value="50S RIBOSOMAL PROTEIN L28"/>
    <property type="match status" value="1"/>
</dbReference>
<dbReference type="PANTHER" id="PTHR39080:SF1">
    <property type="entry name" value="LARGE RIBOSOMAL SUBUNIT PROTEIN BL28A"/>
    <property type="match status" value="1"/>
</dbReference>
<dbReference type="Pfam" id="PF00830">
    <property type="entry name" value="Ribosomal_L28"/>
    <property type="match status" value="1"/>
</dbReference>
<dbReference type="SUPFAM" id="SSF143800">
    <property type="entry name" value="L28p-like"/>
    <property type="match status" value="1"/>
</dbReference>
<keyword id="KW-1185">Reference proteome</keyword>
<keyword id="KW-0687">Ribonucleoprotein</keyword>
<keyword id="KW-0689">Ribosomal protein</keyword>
<evidence type="ECO:0000255" key="1">
    <source>
        <dbReference type="HAMAP-Rule" id="MF_00373"/>
    </source>
</evidence>
<evidence type="ECO:0000305" key="2"/>
<proteinExistence type="inferred from homology"/>
<comment type="similarity">
    <text evidence="1">Belongs to the bacterial ribosomal protein bL28 family.</text>
</comment>
<protein>
    <recommendedName>
        <fullName evidence="1">Large ribosomal subunit protein bL28</fullName>
    </recommendedName>
    <alternativeName>
        <fullName evidence="2">50S ribosomal protein L28</fullName>
    </alternativeName>
</protein>
<feature type="chain" id="PRO_1000007299" description="Large ribosomal subunit protein bL28">
    <location>
        <begin position="1"/>
        <end position="63"/>
    </location>
</feature>
<reference key="1">
    <citation type="submission" date="2006-10" db="EMBL/GenBank/DDBJ databases">
        <title>Complete sequence of chromosome of Pelobacter propionicus DSM 2379.</title>
        <authorList>
            <consortium name="US DOE Joint Genome Institute"/>
            <person name="Copeland A."/>
            <person name="Lucas S."/>
            <person name="Lapidus A."/>
            <person name="Barry K."/>
            <person name="Detter J.C."/>
            <person name="Glavina del Rio T."/>
            <person name="Hammon N."/>
            <person name="Israni S."/>
            <person name="Dalin E."/>
            <person name="Tice H."/>
            <person name="Pitluck S."/>
            <person name="Saunders E."/>
            <person name="Brettin T."/>
            <person name="Bruce D."/>
            <person name="Han C."/>
            <person name="Tapia R."/>
            <person name="Schmutz J."/>
            <person name="Larimer F."/>
            <person name="Land M."/>
            <person name="Hauser L."/>
            <person name="Kyrpides N."/>
            <person name="Kim E."/>
            <person name="Lovley D."/>
            <person name="Richardson P."/>
        </authorList>
    </citation>
    <scope>NUCLEOTIDE SEQUENCE [LARGE SCALE GENOMIC DNA]</scope>
    <source>
        <strain>DSM 2379 / NBRC 103807 / OttBd1</strain>
    </source>
</reference>